<dbReference type="PIR" id="S19624">
    <property type="entry name" value="S19624"/>
</dbReference>
<dbReference type="SMR" id="P25514"/>
<dbReference type="GO" id="GO:0005576">
    <property type="term" value="C:extracellular region"/>
    <property type="evidence" value="ECO:0007669"/>
    <property type="project" value="UniProtKB-SubCell"/>
</dbReference>
<dbReference type="GO" id="GO:0007155">
    <property type="term" value="P:cell adhesion"/>
    <property type="evidence" value="ECO:0007669"/>
    <property type="project" value="UniProtKB-KW"/>
</dbReference>
<dbReference type="GO" id="GO:0030193">
    <property type="term" value="P:regulation of blood coagulation"/>
    <property type="evidence" value="ECO:0007669"/>
    <property type="project" value="InterPro"/>
</dbReference>
<dbReference type="InterPro" id="IPR002463">
    <property type="entry name" value="Ornatin"/>
</dbReference>
<dbReference type="Pfam" id="PF02088">
    <property type="entry name" value="Ornatin"/>
    <property type="match status" value="1"/>
</dbReference>
<dbReference type="PRINTS" id="PR01184">
    <property type="entry name" value="ORNATIN"/>
</dbReference>
<proteinExistence type="evidence at protein level"/>
<feature type="chain" id="PRO_0000215265" description="Ornatin-E">
    <location>
        <begin position="1"/>
        <end position="50"/>
    </location>
</feature>
<feature type="short sequence motif" description="Cell attachment site">
    <location>
        <begin position="42"/>
        <end position="44"/>
    </location>
</feature>
<evidence type="ECO:0000305" key="1"/>
<name>ORNE_PLAOR</name>
<accession>P25514</accession>
<protein>
    <recommendedName>
        <fullName>Ornatin-E</fullName>
    </recommendedName>
</protein>
<sequence>IYVRPTKDELLYCGEFRELGQPDKKCRCDGKPCTVGRCNFARGDNDDKCI</sequence>
<organism>
    <name type="scientific">Placobdella ornata</name>
    <name type="common">Turtle leech</name>
    <dbReference type="NCBI Taxonomy" id="6415"/>
    <lineage>
        <taxon>Eukaryota</taxon>
        <taxon>Metazoa</taxon>
        <taxon>Spiralia</taxon>
        <taxon>Lophotrochozoa</taxon>
        <taxon>Annelida</taxon>
        <taxon>Clitellata</taxon>
        <taxon>Hirudinea</taxon>
        <taxon>Rhynchobdellida</taxon>
        <taxon>Glossiphoniidae</taxon>
        <taxon>Placobdella</taxon>
    </lineage>
</organism>
<comment type="function">
    <text>Potent inhibitor of fibrinogen interaction with platelet receptors expressed on glycoprotein IIb-IIIa complex. May prevent blood from clotting during either feeding and/or storage of ingested blood.</text>
</comment>
<comment type="subcellular location">
    <subcellularLocation>
        <location>Secreted</location>
    </subcellularLocation>
</comment>
<comment type="similarity">
    <text evidence="1">Belongs to the ornatin family.</text>
</comment>
<keyword id="KW-0130">Cell adhesion</keyword>
<keyword id="KW-0903">Direct protein sequencing</keyword>
<keyword id="KW-0964">Secreted</keyword>
<reference key="1">
    <citation type="journal article" date="1991" name="Eur. J. Biochem.">
        <title>Ornatins: potent glycoprotein IIb-IIIa antagonists and platelet aggregation inhibitors from the leech Placobdella ornata.</title>
        <authorList>
            <person name="Mazur P."/>
            <person name="Henzel W.J."/>
            <person name="Seymour J.L."/>
            <person name="Lazarus R.A."/>
        </authorList>
    </citation>
    <scope>PROTEIN SEQUENCE</scope>
</reference>